<dbReference type="EMBL" id="AE014297">
    <property type="protein sequence ID" value="AAF52038.1"/>
    <property type="molecule type" value="Genomic_DNA"/>
</dbReference>
<dbReference type="EMBL" id="AY121655">
    <property type="protein sequence ID" value="AAM51982.1"/>
    <property type="molecule type" value="mRNA"/>
</dbReference>
<dbReference type="RefSeq" id="NP_001303424.1">
    <property type="nucleotide sequence ID" value="NM_001316495.1"/>
</dbReference>
<dbReference type="RefSeq" id="NP_649531.1">
    <property type="nucleotide sequence ID" value="NM_141274.3"/>
</dbReference>
<dbReference type="SMR" id="Q9VNA8"/>
<dbReference type="BioGRID" id="65852">
    <property type="interactions" value="2"/>
</dbReference>
<dbReference type="FunCoup" id="Q9VNA8">
    <property type="interactions" value="1971"/>
</dbReference>
<dbReference type="IntAct" id="Q9VNA8">
    <property type="interactions" value="4"/>
</dbReference>
<dbReference type="STRING" id="7227.FBpp0312592"/>
<dbReference type="PaxDb" id="7227-FBpp0078445"/>
<dbReference type="EnsemblMetazoa" id="FBtr0078802">
    <property type="protein sequence ID" value="FBpp0078445"/>
    <property type="gene ID" value="FBgn0086695"/>
</dbReference>
<dbReference type="EnsemblMetazoa" id="FBtr0347559">
    <property type="protein sequence ID" value="FBpp0312592"/>
    <property type="gene ID" value="FBgn0086695"/>
</dbReference>
<dbReference type="GeneID" id="40642"/>
<dbReference type="KEGG" id="dme:Dmel_CG2669"/>
<dbReference type="AGR" id="FB:FBgn0086695"/>
<dbReference type="CTD" id="40642"/>
<dbReference type="FlyBase" id="FBgn0086695">
    <property type="gene designation" value="hd"/>
</dbReference>
<dbReference type="VEuPathDB" id="VectorBase:FBgn0086695"/>
<dbReference type="eggNOG" id="KOG4734">
    <property type="taxonomic scope" value="Eukaryota"/>
</dbReference>
<dbReference type="GeneTree" id="ENSGT00390000000447"/>
<dbReference type="HOGENOM" id="CLU_021567_1_0_1"/>
<dbReference type="InParanoid" id="Q9VNA8"/>
<dbReference type="OMA" id="WCLKTRV"/>
<dbReference type="OrthoDB" id="534063at2759"/>
<dbReference type="PhylomeDB" id="Q9VNA8"/>
<dbReference type="BioGRID-ORCS" id="40642">
    <property type="hits" value="0 hits in 1 CRISPR screen"/>
</dbReference>
<dbReference type="GenomeRNAi" id="40642"/>
<dbReference type="PRO" id="PR:Q9VNA8"/>
<dbReference type="Proteomes" id="UP000000803">
    <property type="component" value="Chromosome 3R"/>
</dbReference>
<dbReference type="Bgee" id="FBgn0086695">
    <property type="expression patterns" value="Expressed in secondary oocyte and 35 other cell types or tissues"/>
</dbReference>
<dbReference type="ExpressionAtlas" id="Q9VNA8">
    <property type="expression patterns" value="baseline and differential"/>
</dbReference>
<dbReference type="GO" id="GO:0005634">
    <property type="term" value="C:nucleus"/>
    <property type="evidence" value="ECO:0000314"/>
    <property type="project" value="FlyBase"/>
</dbReference>
<dbReference type="GO" id="GO:0051301">
    <property type="term" value="P:cell division"/>
    <property type="evidence" value="ECO:0007669"/>
    <property type="project" value="UniProtKB-KW"/>
</dbReference>
<dbReference type="GO" id="GO:0007307">
    <property type="term" value="P:eggshell chorion gene amplification"/>
    <property type="evidence" value="ECO:0000315"/>
    <property type="project" value="FlyBase"/>
</dbReference>
<dbReference type="GO" id="GO:0033260">
    <property type="term" value="P:nuclear DNA replication"/>
    <property type="evidence" value="ECO:0000315"/>
    <property type="project" value="FlyBase"/>
</dbReference>
<dbReference type="InterPro" id="IPR024861">
    <property type="entry name" value="Donson"/>
</dbReference>
<dbReference type="PANTHER" id="PTHR12972">
    <property type="entry name" value="DOWNSTREAM NEIGHBOR OF SON"/>
    <property type="match status" value="1"/>
</dbReference>
<dbReference type="PANTHER" id="PTHR12972:SF0">
    <property type="entry name" value="PROTEIN DOWNSTREAM NEIGHBOR OF SON"/>
    <property type="match status" value="1"/>
</dbReference>
<dbReference type="PRINTS" id="PR02064">
    <property type="entry name" value="DONSON"/>
</dbReference>
<name>DONS_DROME</name>
<accession>Q9VNA8</accession>
<accession>Q540V6</accession>
<gene>
    <name type="primary">hd</name>
    <name type="ORF">CG2669</name>
</gene>
<proteinExistence type="evidence at protein level"/>
<organism>
    <name type="scientific">Drosophila melanogaster</name>
    <name type="common">Fruit fly</name>
    <dbReference type="NCBI Taxonomy" id="7227"/>
    <lineage>
        <taxon>Eukaryota</taxon>
        <taxon>Metazoa</taxon>
        <taxon>Ecdysozoa</taxon>
        <taxon>Arthropoda</taxon>
        <taxon>Hexapoda</taxon>
        <taxon>Insecta</taxon>
        <taxon>Pterygota</taxon>
        <taxon>Neoptera</taxon>
        <taxon>Endopterygota</taxon>
        <taxon>Diptera</taxon>
        <taxon>Brachycera</taxon>
        <taxon>Muscomorpha</taxon>
        <taxon>Ephydroidea</taxon>
        <taxon>Drosophilidae</taxon>
        <taxon>Drosophila</taxon>
        <taxon>Sophophora</taxon>
    </lineage>
</organism>
<reference key="1">
    <citation type="journal article" date="2000" name="Science">
        <title>The genome sequence of Drosophila melanogaster.</title>
        <authorList>
            <person name="Adams M.D."/>
            <person name="Celniker S.E."/>
            <person name="Holt R.A."/>
            <person name="Evans C.A."/>
            <person name="Gocayne J.D."/>
            <person name="Amanatides P.G."/>
            <person name="Scherer S.E."/>
            <person name="Li P.W."/>
            <person name="Hoskins R.A."/>
            <person name="Galle R.F."/>
            <person name="George R.A."/>
            <person name="Lewis S.E."/>
            <person name="Richards S."/>
            <person name="Ashburner M."/>
            <person name="Henderson S.N."/>
            <person name="Sutton G.G."/>
            <person name="Wortman J.R."/>
            <person name="Yandell M.D."/>
            <person name="Zhang Q."/>
            <person name="Chen L.X."/>
            <person name="Brandon R.C."/>
            <person name="Rogers Y.-H.C."/>
            <person name="Blazej R.G."/>
            <person name="Champe M."/>
            <person name="Pfeiffer B.D."/>
            <person name="Wan K.H."/>
            <person name="Doyle C."/>
            <person name="Baxter E.G."/>
            <person name="Helt G."/>
            <person name="Nelson C.R."/>
            <person name="Miklos G.L.G."/>
            <person name="Abril J.F."/>
            <person name="Agbayani A."/>
            <person name="An H.-J."/>
            <person name="Andrews-Pfannkoch C."/>
            <person name="Baldwin D."/>
            <person name="Ballew R.M."/>
            <person name="Basu A."/>
            <person name="Baxendale J."/>
            <person name="Bayraktaroglu L."/>
            <person name="Beasley E.M."/>
            <person name="Beeson K.Y."/>
            <person name="Benos P.V."/>
            <person name="Berman B.P."/>
            <person name="Bhandari D."/>
            <person name="Bolshakov S."/>
            <person name="Borkova D."/>
            <person name="Botchan M.R."/>
            <person name="Bouck J."/>
            <person name="Brokstein P."/>
            <person name="Brottier P."/>
            <person name="Burtis K.C."/>
            <person name="Busam D.A."/>
            <person name="Butler H."/>
            <person name="Cadieu E."/>
            <person name="Center A."/>
            <person name="Chandra I."/>
            <person name="Cherry J.M."/>
            <person name="Cawley S."/>
            <person name="Dahlke C."/>
            <person name="Davenport L.B."/>
            <person name="Davies P."/>
            <person name="de Pablos B."/>
            <person name="Delcher A."/>
            <person name="Deng Z."/>
            <person name="Mays A.D."/>
            <person name="Dew I."/>
            <person name="Dietz S.M."/>
            <person name="Dodson K."/>
            <person name="Doup L.E."/>
            <person name="Downes M."/>
            <person name="Dugan-Rocha S."/>
            <person name="Dunkov B.C."/>
            <person name="Dunn P."/>
            <person name="Durbin K.J."/>
            <person name="Evangelista C.C."/>
            <person name="Ferraz C."/>
            <person name="Ferriera S."/>
            <person name="Fleischmann W."/>
            <person name="Fosler C."/>
            <person name="Gabrielian A.E."/>
            <person name="Garg N.S."/>
            <person name="Gelbart W.M."/>
            <person name="Glasser K."/>
            <person name="Glodek A."/>
            <person name="Gong F."/>
            <person name="Gorrell J.H."/>
            <person name="Gu Z."/>
            <person name="Guan P."/>
            <person name="Harris M."/>
            <person name="Harris N.L."/>
            <person name="Harvey D.A."/>
            <person name="Heiman T.J."/>
            <person name="Hernandez J.R."/>
            <person name="Houck J."/>
            <person name="Hostin D."/>
            <person name="Houston K.A."/>
            <person name="Howland T.J."/>
            <person name="Wei M.-H."/>
            <person name="Ibegwam C."/>
            <person name="Jalali M."/>
            <person name="Kalush F."/>
            <person name="Karpen G.H."/>
            <person name="Ke Z."/>
            <person name="Kennison J.A."/>
            <person name="Ketchum K.A."/>
            <person name="Kimmel B.E."/>
            <person name="Kodira C.D."/>
            <person name="Kraft C.L."/>
            <person name="Kravitz S."/>
            <person name="Kulp D."/>
            <person name="Lai Z."/>
            <person name="Lasko P."/>
            <person name="Lei Y."/>
            <person name="Levitsky A.A."/>
            <person name="Li J.H."/>
            <person name="Li Z."/>
            <person name="Liang Y."/>
            <person name="Lin X."/>
            <person name="Liu X."/>
            <person name="Mattei B."/>
            <person name="McIntosh T.C."/>
            <person name="McLeod M.P."/>
            <person name="McPherson D."/>
            <person name="Merkulov G."/>
            <person name="Milshina N.V."/>
            <person name="Mobarry C."/>
            <person name="Morris J."/>
            <person name="Moshrefi A."/>
            <person name="Mount S.M."/>
            <person name="Moy M."/>
            <person name="Murphy B."/>
            <person name="Murphy L."/>
            <person name="Muzny D.M."/>
            <person name="Nelson D.L."/>
            <person name="Nelson D.R."/>
            <person name="Nelson K.A."/>
            <person name="Nixon K."/>
            <person name="Nusskern D.R."/>
            <person name="Pacleb J.M."/>
            <person name="Palazzolo M."/>
            <person name="Pittman G.S."/>
            <person name="Pan S."/>
            <person name="Pollard J."/>
            <person name="Puri V."/>
            <person name="Reese M.G."/>
            <person name="Reinert K."/>
            <person name="Remington K."/>
            <person name="Saunders R.D.C."/>
            <person name="Scheeler F."/>
            <person name="Shen H."/>
            <person name="Shue B.C."/>
            <person name="Siden-Kiamos I."/>
            <person name="Simpson M."/>
            <person name="Skupski M.P."/>
            <person name="Smith T.J."/>
            <person name="Spier E."/>
            <person name="Spradling A.C."/>
            <person name="Stapleton M."/>
            <person name="Strong R."/>
            <person name="Sun E."/>
            <person name="Svirskas R."/>
            <person name="Tector C."/>
            <person name="Turner R."/>
            <person name="Venter E."/>
            <person name="Wang A.H."/>
            <person name="Wang X."/>
            <person name="Wang Z.-Y."/>
            <person name="Wassarman D.A."/>
            <person name="Weinstock G.M."/>
            <person name="Weissenbach J."/>
            <person name="Williams S.M."/>
            <person name="Woodage T."/>
            <person name="Worley K.C."/>
            <person name="Wu D."/>
            <person name="Yang S."/>
            <person name="Yao Q.A."/>
            <person name="Ye J."/>
            <person name="Yeh R.-F."/>
            <person name="Zaveri J.S."/>
            <person name="Zhan M."/>
            <person name="Zhang G."/>
            <person name="Zhao Q."/>
            <person name="Zheng L."/>
            <person name="Zheng X.H."/>
            <person name="Zhong F.N."/>
            <person name="Zhong W."/>
            <person name="Zhou X."/>
            <person name="Zhu S.C."/>
            <person name="Zhu X."/>
            <person name="Smith H.O."/>
            <person name="Gibbs R.A."/>
            <person name="Myers E.W."/>
            <person name="Rubin G.M."/>
            <person name="Venter J.C."/>
        </authorList>
    </citation>
    <scope>NUCLEOTIDE SEQUENCE [LARGE SCALE GENOMIC DNA]</scope>
    <source>
        <strain>Berkeley</strain>
    </source>
</reference>
<reference key="2">
    <citation type="journal article" date="2002" name="Genome Biol.">
        <title>Annotation of the Drosophila melanogaster euchromatic genome: a systematic review.</title>
        <authorList>
            <person name="Misra S."/>
            <person name="Crosby M.A."/>
            <person name="Mungall C.J."/>
            <person name="Matthews B.B."/>
            <person name="Campbell K.S."/>
            <person name="Hradecky P."/>
            <person name="Huang Y."/>
            <person name="Kaminker J.S."/>
            <person name="Millburn G.H."/>
            <person name="Prochnik S.E."/>
            <person name="Smith C.D."/>
            <person name="Tupy J.L."/>
            <person name="Whitfield E.J."/>
            <person name="Bayraktaroglu L."/>
            <person name="Berman B.P."/>
            <person name="Bettencourt B.R."/>
            <person name="Celniker S.E."/>
            <person name="de Grey A.D.N.J."/>
            <person name="Drysdale R.A."/>
            <person name="Harris N.L."/>
            <person name="Richter J."/>
            <person name="Russo S."/>
            <person name="Schroeder A.J."/>
            <person name="Shu S.Q."/>
            <person name="Stapleton M."/>
            <person name="Yamada C."/>
            <person name="Ashburner M."/>
            <person name="Gelbart W.M."/>
            <person name="Rubin G.M."/>
            <person name="Lewis S.E."/>
        </authorList>
    </citation>
    <scope>GENOME REANNOTATION</scope>
    <source>
        <strain>Berkeley</strain>
    </source>
</reference>
<reference key="3">
    <citation type="journal article" date="2002" name="Genome Biol.">
        <title>A Drosophila full-length cDNA resource.</title>
        <authorList>
            <person name="Stapleton M."/>
            <person name="Carlson J.W."/>
            <person name="Brokstein P."/>
            <person name="Yu C."/>
            <person name="Champe M."/>
            <person name="George R.A."/>
            <person name="Guarin H."/>
            <person name="Kronmiller B."/>
            <person name="Pacleb J.M."/>
            <person name="Park S."/>
            <person name="Wan K.H."/>
            <person name="Rubin G.M."/>
            <person name="Celniker S.E."/>
        </authorList>
    </citation>
    <scope>NUCLEOTIDE SEQUENCE [LARGE SCALE MRNA]</scope>
    <source>
        <strain>Berkeley</strain>
        <tissue>Embryo</tissue>
    </source>
</reference>
<reference key="4">
    <citation type="journal article" date="2005" name="Curr. Biol.">
        <title>humpty dumpty is required for developmental DNA amplification and cell proliferation in Drosophila.</title>
        <authorList>
            <person name="Bandura J.L."/>
            <person name="Beall E.L."/>
            <person name="Bell M."/>
            <person name="Silver H.R."/>
            <person name="Botchan M.R."/>
            <person name="Calvi B.R."/>
        </authorList>
    </citation>
    <scope>FUNCTION</scope>
    <scope>SUBCELLULAR LOCATION</scope>
    <scope>TISSUE SPECIFICITY</scope>
    <scope>DEVELOPMENTAL STAGE</scope>
    <scope>DISRUPTION PHENOTYPE</scope>
</reference>
<sequence length="568" mass="63438">MSTEASVASKWTRPDDFIKLQRLKQKKNKLAARVSNNNNRRPRHQVDETDKSKLLEAKLAQKRKNPFAKSTADAKKLRVDPQLADLEPVVTASSCFVRETPTRPAPAKFVLQKYDPQAFAKLFQHPQINAEDEDDAELAARQKHTAHLPVDWSLKTRARFFCPTELPAIQLKTSQLASGLTSFVRCMDPQRTESTLDISDATRFNQCNYYWQHPHLPWLTLYPRTAKENVGVVVGERERKALAEEWDFSFRGLFQLLRARQCPYFYLCANTFTVLFRAAGVGGRPESHALVTPSTRGMRQALRQEGIEFSMPLKSDNSGNAHDNSFNEESTTTSLGPEAGEDAPPPAQEDEDDDEDWLESLGVDERELRRIQSSHARKQQAAEMREDFSDNSLLLVDGVECQGFFSYLLNAKSAISTVGRLAGVPPTLLSPVAFPKATMQHLVPRSKKVRLDGVDYFSIDIKGLILPTFLPSVAELLSETRQMFSSTLASSINTLAFSKATQKLLETPETPQSDAEGEDAAGQVFGEQNLSECGLLPAVVGSICRTGQHAVGLLERVCYQRDEGYAWS</sequence>
<comment type="function">
    <text evidence="2">Essential for DNA amplification in the ovary and required for cell proliferation during development.</text>
</comment>
<comment type="subcellular location">
    <subcellularLocation>
        <location evidence="2">Nucleus</location>
    </subcellularLocation>
</comment>
<comment type="tissue specificity">
    <text evidence="2">Expression peaks during late G1 and S phase (at protein level).</text>
</comment>
<comment type="developmental stage">
    <text evidence="2">Expressed throughout development.</text>
</comment>
<comment type="disruption phenotype">
    <text evidence="2">Flies display a distinct thin-eggshell phenotype.</text>
</comment>
<comment type="similarity">
    <text evidence="3">Belongs to the DONSON family.</text>
</comment>
<feature type="chain" id="PRO_0000079978" description="Protein downstream neighbor of son homolog">
    <location>
        <begin position="1"/>
        <end position="568"/>
    </location>
</feature>
<feature type="region of interest" description="Disordered" evidence="1">
    <location>
        <begin position="28"/>
        <end position="48"/>
    </location>
</feature>
<feature type="region of interest" description="Disordered" evidence="1">
    <location>
        <begin position="311"/>
        <end position="355"/>
    </location>
</feature>
<feature type="compositionally biased region" description="Polar residues" evidence="1">
    <location>
        <begin position="315"/>
        <end position="335"/>
    </location>
</feature>
<evidence type="ECO:0000256" key="1">
    <source>
        <dbReference type="SAM" id="MobiDB-lite"/>
    </source>
</evidence>
<evidence type="ECO:0000269" key="2">
    <source>
    </source>
</evidence>
<evidence type="ECO:0000305" key="3"/>
<protein>
    <recommendedName>
        <fullName>Protein downstream neighbor of son homolog</fullName>
    </recommendedName>
    <alternativeName>
        <fullName>Protein humpty dumpty</fullName>
    </alternativeName>
</protein>
<keyword id="KW-0131">Cell cycle</keyword>
<keyword id="KW-0132">Cell division</keyword>
<keyword id="KW-0217">Developmental protein</keyword>
<keyword id="KW-0539">Nucleus</keyword>
<keyword id="KW-1185">Reference proteome</keyword>